<reference key="1">
    <citation type="journal article" date="2007" name="J. Virol.">
        <title>Comparative analysis of twelve genomes of three novel group 2c and group 2d coronaviruses reveals unique group and subgroup features.</title>
        <authorList>
            <person name="Woo P.C.Y."/>
            <person name="Wang M."/>
            <person name="Lau S.K.P."/>
            <person name="Xu H.F."/>
            <person name="Poon R.W.S."/>
            <person name="Guo R."/>
            <person name="Wong B.H.L."/>
            <person name="Gao K."/>
            <person name="Tsoi H.-W."/>
            <person name="Huang Y."/>
            <person name="Li K.S.M."/>
            <person name="Lam C.S.F."/>
            <person name="Chan K.-H."/>
            <person name="Zheng B.-J."/>
            <person name="Yuen K.-Y."/>
        </authorList>
    </citation>
    <scope>NUCLEOTIDE SEQUENCE [GENOMIC RNA]</scope>
    <source>
        <strain>Isolate HKU4-1</strain>
    </source>
</reference>
<evidence type="ECO:0000250" key="1">
    <source>
        <dbReference type="UniProtKB" id="P59633"/>
    </source>
</evidence>
<sequence length="119" mass="13898">MDYVSLLNQFWQKQIKSYKETPSQYHYLYPPRFFYKPVLGNLQHPTKWCCTIKFYEYSAQATECTKASAKQDAARLICEQLQAAGLLNGMELRFRSSASDIFGQNRYDASKSYFFSKTA</sequence>
<dbReference type="EMBL" id="EF065505">
    <property type="protein sequence ID" value="ABN10841.1"/>
    <property type="molecule type" value="Genomic_RNA"/>
</dbReference>
<dbReference type="SMR" id="A3EX96"/>
<dbReference type="KEGG" id="vg:4835992"/>
<dbReference type="OrthoDB" id="27162at10239"/>
<dbReference type="Proteomes" id="UP000006574">
    <property type="component" value="Genome"/>
</dbReference>
<dbReference type="GO" id="GO:0033650">
    <property type="term" value="C:host cell mitochondrion"/>
    <property type="evidence" value="ECO:0007669"/>
    <property type="project" value="UniProtKB-SubCell"/>
</dbReference>
<dbReference type="GO" id="GO:0044196">
    <property type="term" value="C:host cell nucleolus"/>
    <property type="evidence" value="ECO:0007669"/>
    <property type="project" value="UniProtKB-SubCell"/>
</dbReference>
<dbReference type="GO" id="GO:0003723">
    <property type="term" value="F:RNA binding"/>
    <property type="evidence" value="ECO:0007669"/>
    <property type="project" value="UniProtKB-KW"/>
</dbReference>
<dbReference type="GO" id="GO:0052150">
    <property type="term" value="P:symbiont-mediated perturbation of host apoptosis"/>
    <property type="evidence" value="ECO:0007669"/>
    <property type="project" value="UniProtKB-KW"/>
</dbReference>
<dbReference type="GO" id="GO:0039646">
    <property type="term" value="P:symbiont-mediated perturbation of host cell cycle G0/G1 transition checkpoint"/>
    <property type="evidence" value="ECO:0007669"/>
    <property type="project" value="UniProtKB-KW"/>
</dbReference>
<dbReference type="GO" id="GO:0044071">
    <property type="term" value="P:symbiont-mediated perturbation of host cell cycle progression"/>
    <property type="evidence" value="ECO:0007669"/>
    <property type="project" value="UniProtKB-KW"/>
</dbReference>
<dbReference type="CDD" id="cd00048">
    <property type="entry name" value="DSRM_SF"/>
    <property type="match status" value="1"/>
</dbReference>
<dbReference type="Gene3D" id="3.30.160.20">
    <property type="match status" value="1"/>
</dbReference>
<dbReference type="InterPro" id="IPR014720">
    <property type="entry name" value="dsRBD_dom"/>
</dbReference>
<dbReference type="Pfam" id="PF00035">
    <property type="entry name" value="dsrm"/>
    <property type="match status" value="1"/>
</dbReference>
<dbReference type="SUPFAM" id="SSF54768">
    <property type="entry name" value="dsRNA-binding domain-like"/>
    <property type="match status" value="1"/>
</dbReference>
<name>NS3B_BCHK4</name>
<keyword id="KW-0053">Apoptosis</keyword>
<keyword id="KW-1077">G0/G1 host cell cycle checkpoint dysregulation by virus</keyword>
<keyword id="KW-1045">Host mitochondrion</keyword>
<keyword id="KW-1048">Host nucleus</keyword>
<keyword id="KW-0945">Host-virus interaction</keyword>
<keyword id="KW-1119">Modulation of host cell apoptosis by virus</keyword>
<keyword id="KW-1121">Modulation of host cell cycle by virus</keyword>
<keyword id="KW-1185">Reference proteome</keyword>
<keyword id="KW-0694">RNA-binding</keyword>
<feature type="chain" id="PRO_0000290265" description="Non-structural protein 3b">
    <location>
        <begin position="1"/>
        <end position="119"/>
    </location>
</feature>
<feature type="domain" description="DRBM">
    <location>
        <begin position="2"/>
        <end position="83"/>
    </location>
</feature>
<gene>
    <name type="ORF">3b</name>
</gene>
<accession>A3EX96</accession>
<proteinExistence type="inferred from homology"/>
<organismHost>
    <name type="scientific">Tylonycteris pachypus</name>
    <name type="common">Lesser bamboo bat</name>
    <name type="synonym">Vespertilio pachypus</name>
    <dbReference type="NCBI Taxonomy" id="258959"/>
</organismHost>
<protein>
    <recommendedName>
        <fullName>Non-structural protein 3b</fullName>
        <shortName>ns3b</shortName>
    </recommendedName>
    <alternativeName>
        <fullName>Accessory protein 3b</fullName>
    </alternativeName>
</protein>
<comment type="function">
    <text evidence="1">Induces host cell G0/G1 arrest and apoptosis.</text>
</comment>
<comment type="subunit">
    <text evidence="1">Interacts with host RUNX1 isoform b.</text>
</comment>
<comment type="subcellular location">
    <subcellularLocation>
        <location evidence="1">Host nucleus</location>
        <location evidence="1">Host nucleolus</location>
    </subcellularLocation>
    <subcellularLocation>
        <location evidence="1">Host mitochondrion</location>
    </subcellularLocation>
</comment>
<organism>
    <name type="scientific">Bat coronavirus HKU4</name>
    <name type="common">BtCoV</name>
    <name type="synonym">BtCoV/HKU4/2004</name>
    <dbReference type="NCBI Taxonomy" id="694007"/>
    <lineage>
        <taxon>Viruses</taxon>
        <taxon>Riboviria</taxon>
        <taxon>Orthornavirae</taxon>
        <taxon>Pisuviricota</taxon>
        <taxon>Pisoniviricetes</taxon>
        <taxon>Nidovirales</taxon>
        <taxon>Cornidovirineae</taxon>
        <taxon>Coronaviridae</taxon>
        <taxon>Orthocoronavirinae</taxon>
        <taxon>Betacoronavirus</taxon>
        <taxon>Merbecovirus</taxon>
    </lineage>
</organism>